<comment type="function">
    <text evidence="1">Usually encoded in the trnK tRNA gene intron. Probably assists in splicing its own and other chloroplast group II introns.</text>
</comment>
<comment type="subcellular location">
    <subcellularLocation>
        <location>Plastid</location>
        <location>Chloroplast</location>
    </subcellularLocation>
</comment>
<comment type="similarity">
    <text evidence="1">Belongs to the intron maturase 2 family. MatK subfamily.</text>
</comment>
<protein>
    <recommendedName>
        <fullName evidence="1">Maturase K</fullName>
    </recommendedName>
    <alternativeName>
        <fullName evidence="1">Intron maturase</fullName>
    </alternativeName>
</protein>
<geneLocation type="chloroplast"/>
<dbReference type="EMBL" id="AF144359">
    <property type="protein sequence ID" value="AAG43328.1"/>
    <property type="molecule type" value="Genomic_DNA"/>
</dbReference>
<dbReference type="GO" id="GO:0009507">
    <property type="term" value="C:chloroplast"/>
    <property type="evidence" value="ECO:0007669"/>
    <property type="project" value="UniProtKB-SubCell"/>
</dbReference>
<dbReference type="GO" id="GO:0003723">
    <property type="term" value="F:RNA binding"/>
    <property type="evidence" value="ECO:0007669"/>
    <property type="project" value="UniProtKB-KW"/>
</dbReference>
<dbReference type="GO" id="GO:0006397">
    <property type="term" value="P:mRNA processing"/>
    <property type="evidence" value="ECO:0007669"/>
    <property type="project" value="UniProtKB-KW"/>
</dbReference>
<dbReference type="GO" id="GO:0008380">
    <property type="term" value="P:RNA splicing"/>
    <property type="evidence" value="ECO:0007669"/>
    <property type="project" value="UniProtKB-UniRule"/>
</dbReference>
<dbReference type="GO" id="GO:0008033">
    <property type="term" value="P:tRNA processing"/>
    <property type="evidence" value="ECO:0007669"/>
    <property type="project" value="UniProtKB-KW"/>
</dbReference>
<dbReference type="HAMAP" id="MF_01390">
    <property type="entry name" value="MatK"/>
    <property type="match status" value="1"/>
</dbReference>
<dbReference type="InterPro" id="IPR024937">
    <property type="entry name" value="Domain_X"/>
</dbReference>
<dbReference type="InterPro" id="IPR002866">
    <property type="entry name" value="Maturase_MatK"/>
</dbReference>
<dbReference type="InterPro" id="IPR024942">
    <property type="entry name" value="Maturase_MatK_N"/>
</dbReference>
<dbReference type="PANTHER" id="PTHR34811">
    <property type="entry name" value="MATURASE K"/>
    <property type="match status" value="1"/>
</dbReference>
<dbReference type="PANTHER" id="PTHR34811:SF1">
    <property type="entry name" value="MATURASE K"/>
    <property type="match status" value="1"/>
</dbReference>
<dbReference type="Pfam" id="PF01348">
    <property type="entry name" value="Intron_maturas2"/>
    <property type="match status" value="1"/>
</dbReference>
<dbReference type="Pfam" id="PF01824">
    <property type="entry name" value="MatK_N"/>
    <property type="match status" value="1"/>
</dbReference>
<keyword id="KW-0150">Chloroplast</keyword>
<keyword id="KW-0507">mRNA processing</keyword>
<keyword id="KW-0934">Plastid</keyword>
<keyword id="KW-0694">RNA-binding</keyword>
<keyword id="KW-0819">tRNA processing</keyword>
<evidence type="ECO:0000255" key="1">
    <source>
        <dbReference type="HAMAP-Rule" id="MF_01390"/>
    </source>
</evidence>
<gene>
    <name evidence="1" type="primary">matK</name>
</gene>
<proteinExistence type="inferred from homology"/>
<organism>
    <name type="scientific">Lepidium campestre</name>
    <name type="common">Field pepperwort</name>
    <name type="synonym">Thlaspi campestre</name>
    <dbReference type="NCBI Taxonomy" id="65351"/>
    <lineage>
        <taxon>Eukaryota</taxon>
        <taxon>Viridiplantae</taxon>
        <taxon>Streptophyta</taxon>
        <taxon>Embryophyta</taxon>
        <taxon>Tracheophyta</taxon>
        <taxon>Spermatophyta</taxon>
        <taxon>Magnoliopsida</taxon>
        <taxon>eudicotyledons</taxon>
        <taxon>Gunneridae</taxon>
        <taxon>Pentapetalae</taxon>
        <taxon>rosids</taxon>
        <taxon>malvids</taxon>
        <taxon>Brassicales</taxon>
        <taxon>Brassicaceae</taxon>
        <taxon>Lepidieae</taxon>
        <taxon>Lepidium</taxon>
    </lineage>
</organism>
<reference key="1">
    <citation type="submission" date="1999-04" db="EMBL/GenBank/DDBJ databases">
        <title>Evolutionary analysis of plastidic maturase K and nuclear chalcone synthase and their utility for phylogenetic reconstructions within the Brassicaceae.</title>
        <authorList>
            <person name="Koch M."/>
            <person name="Mitchell-Olds T."/>
        </authorList>
    </citation>
    <scope>NUCLEOTIDE SEQUENCE [GENOMIC DNA]</scope>
</reference>
<sequence length="504" mass="60431">MXXXXGYLEFDGARQQSFLYPLFFREYIYVLAYDHGLNRLNRNRSIFLENADYDKKYSSLIVKRLILRMYEQNRLIIPTKDLNQNNFLGHTSLFYYQMISVLFAVIVEIPFSLRLGSSFEGKQFKKSYNLQSIHSIFPFLEDKLSHFNYVLDVLIPYPIHLEILVQTLRYRVKDASSLHFFRFCLYEYCNWKNFYIKKKAILNPRFLLFLYNSHICEYESIFFFLRKRSSHLRSTSYEVLFERILFYVKIQHFLKVFVNNFPAILGLLKDPFIHYVRYHGRCILATKDTPLLMNKWKYYFVNLWQCYFSVWFQSQKVNINQLSKDNLEFLGYLSSLRLNPLVVRSQMLENSFLLDNVRIKLDTKIPISSIIRSLAKDKFCTVLGHPISKATWTDSSDSDILNRFVRICRNISHYYSGSSKKKNLYRIKYILRLCCVKTLARKHKSTVRAFLKRLGSGLLEEFLTGEDQILSLIFPRSYYAYKKLYRVRIWYLDILYLNDLVNHE</sequence>
<accession>Q9GF36</accession>
<name>MATK_LEPCM</name>
<feature type="chain" id="PRO_0000143471" description="Maturase K">
    <location>
        <begin position="1"/>
        <end position="504"/>
    </location>
</feature>